<sequence length="193" mass="21768">MAAIRKKLVIVGDGACGKTCLLIVFSKDQFPEVYVPTVFENYVADIEVDGKQVELALWDTAGQEDYDRLRPLSYPDTDVILMCFSIDSPDSLENIPEKWTPEVKHFCPNVPIILVGNKKDLRNDEHTRRELAKMKQEPVKPEEGRDMANRIGAFGYMECSAKTKDGVREVFEMATRAALQARRGKKKSGCLVL</sequence>
<gene>
    <name type="primary">RHOA</name>
    <name type="synonym">ARHA</name>
    <name type="synonym">RHO12</name>
</gene>
<reference key="1">
    <citation type="journal article" date="1989" name="Biochem. Biophys. Res. Commun.">
        <title>cDNA cloning of Gb, the substrate for botulinum ADP-ribosyltransferase from bovine adrenal gland and its identification as a rho gene product.</title>
        <authorList>
            <person name="Ogorochi T."/>
            <person name="Nemoto Y."/>
            <person name="Nakajima M."/>
            <person name="Nakamura E."/>
            <person name="Fujiwara M."/>
            <person name="Narumiya S."/>
        </authorList>
    </citation>
    <scope>NUCLEOTIDE SEQUENCE [MRNA]</scope>
</reference>
<reference key="2">
    <citation type="submission" date="2005-08" db="EMBL/GenBank/DDBJ databases">
        <authorList>
            <consortium name="NIH - Mammalian Gene Collection (MGC) project"/>
        </authorList>
    </citation>
    <scope>NUCLEOTIDE SEQUENCE [LARGE SCALE MRNA]</scope>
    <source>
        <strain>Crossbred X Angus</strain>
        <tissue>Ileum</tissue>
    </source>
</reference>
<reference key="3">
    <citation type="journal article" date="1988" name="J. Biol. Chem.">
        <title>Substrate for botulinum ADP-ribosyltransferase, Gb, has an amino acid sequence homologous to a putative rho gene product.</title>
        <authorList>
            <person name="Narumiya S."/>
            <person name="Sekine A."/>
            <person name="Fujiwara M."/>
        </authorList>
    </citation>
    <scope>PROTEIN SEQUENCE OF 19-25; 42-50; 52-57; 59-97; 99-104; 134-162 AND 169-176</scope>
    <source>
        <tissue>Adrenal gland</tissue>
    </source>
</reference>
<reference key="4">
    <citation type="journal article" date="1990" name="J. Biol. Chem.">
        <title>Guanine nucleotide-dependent ADP-ribosylation of soluble rho catalyzed by Clostridium botulinum C3 ADP-ribosyltransferase. Isolation and characterization of a newly recognized form of rhoA.</title>
        <authorList>
            <person name="Williamson K.C."/>
            <person name="Smith L.A."/>
            <person name="Moss J."/>
            <person name="Vaughan M."/>
        </authorList>
    </citation>
    <scope>PROTEIN SEQUENCE OF 28-70 AND 99-194</scope>
    <scope>ADP-RIBOSYLATION AT ASN-41</scope>
</reference>
<reference key="5">
    <citation type="journal article" date="1989" name="J. Biol. Chem.">
        <title>Asparagine residue in the rho gene product is the modification site for botulinum ADP-ribosyltransferase.</title>
        <authorList>
            <person name="Sekine A."/>
            <person name="Fujiwara M."/>
            <person name="Narumiya S."/>
        </authorList>
    </citation>
    <scope>PROTEIN SEQUENCE OF 37-47</scope>
    <scope>ADP-RIBOSYLATION AT ASN-41</scope>
</reference>
<reference key="6">
    <citation type="journal article" date="1991" name="J. Biol. Chem.">
        <title>The posttranslationally modified C-terminal structure of bovine aortic smooth muscle rhoA p21.</title>
        <authorList>
            <person name="Katayama M."/>
            <person name="Kawata M."/>
            <person name="Yoshida Y."/>
            <person name="Horiuchi H."/>
            <person name="Yamamoto T."/>
            <person name="Matsuura Y."/>
            <person name="Takai Y."/>
        </authorList>
    </citation>
    <scope>ISOPRENYLATION AT CYS-190</scope>
    <scope>METHYLATION AT CYS-190</scope>
    <source>
        <tissue>Aortic smooth muscle</tissue>
    </source>
</reference>
<comment type="function">
    <text evidence="1 2 4">Small GTPase which cycles between an active GTP-bound and an inactive GDP-bound state. Mainly associated with cytoskeleton organization, in active state binds to a variety of effector proteins to regulate cellular responses such as cytoskeletal dynamics, cell migration and cell cycle. Regulates a signal transduction pathway linking plasma membrane receptors to the assembly of focal adhesions and actin stress fibers. Involved in a microtubule-dependent signal that is required for the myosin contractile ring formation during cell cycle cytokinesis. Plays an essential role in cleavage furrow formation. Required for the apical junction formation of keratinocyte cell-cell adhesion. Essential for the SPATA13-mediated regulation of cell migration and adhesion assembly and disassembly. The MEMO1-RHOA-DIAPH1 signaling pathway plays an important role in ERBB2-dependent stabilization of microtubules at the cell cortex. It controls the localization of APC and CLASP2 to the cell membrane, via the regulation of GSK3B activity. In turn, membrane-bound APC allows the localization of the MACF1 to the cell membrane, which is required for microtubule capture and stabilization. Regulates KCNA2 potassium channel activity by reducing its location at the cell surface in response to CHRM1 activation; promotes KCNA2 endocytosis. Acts as an allosteric activator of guanine nucleotide exchange factor ECT2 by binding in its activated GTP-bound form to the PH domain of ECT2 which stimulates the release of PH inhibition and promotes the binding of substrate RHOA to the ECT2 catalytic center. May be an activator of PLCE1. In neurons, involved in the inhibition of the initial spine growth. Upon activation by CaMKII, modulates dendritic spine structural plasticity by relaying CaMKII transient activation to synapse-specific, long-term signaling. Acts as a regulator of platelet alpha-granule release during activation and aggregation of platelets (By similarity). When activated by DAAM1 may signal centrosome maturation and chromosomal segregation during cell division. May also be involved in contractile ring formation during cytokinesis.</text>
</comment>
<comment type="catalytic activity">
    <reaction evidence="1">
        <text>GTP + H2O = GDP + phosphate + H(+)</text>
        <dbReference type="Rhea" id="RHEA:19669"/>
        <dbReference type="ChEBI" id="CHEBI:15377"/>
        <dbReference type="ChEBI" id="CHEBI:15378"/>
        <dbReference type="ChEBI" id="CHEBI:37565"/>
        <dbReference type="ChEBI" id="CHEBI:43474"/>
        <dbReference type="ChEBI" id="CHEBI:58189"/>
        <dbReference type="EC" id="3.6.5.2"/>
    </reaction>
    <physiologicalReaction direction="left-to-right" evidence="1">
        <dbReference type="Rhea" id="RHEA:19670"/>
    </physiologicalReaction>
</comment>
<comment type="cofactor">
    <cofactor evidence="1">
        <name>Mg(2+)</name>
        <dbReference type="ChEBI" id="CHEBI:18420"/>
    </cofactor>
</comment>
<comment type="activity regulation">
    <text evidence="1">Regulated by guanine nucleotide exchange factors (GEFs) which promote the exchange of bound GDP for free GTP, GTPase activating proteins (GAPs) which increase the GTP hydrolysis activity and GDP dissociation inhibitors which inhibit the dissociation of the nucleotide from the GTPase. Activated by GEFs such as ARHGEF2, ARHGEF3, ARHGEF28 and BCR. Inhibited by GAPs such as ARHGAP30. Inhibited by GDP dissociation inhibitors such as ARHGDIA.</text>
</comment>
<comment type="subunit">
    <text evidence="1 4">Interacts with ARHGEF28 (By similarity). Interacts (via GTP-bound form) with RIPOR1 (via N-terminus); this interaction links RHOA to STK24 and STK26 kinases. Interacts with RIPOR2 (via active GTP- or inactive GDP-bound forms) isoform 1 and isoform 2; these interactions are direct, block the loading of GTP to RHOA and decrease upon chemokine CCL19 stimulation in primary T lymphocytes. Binds PRKCL1, ROCK1 and ROCK2. Interacts with ARHGEF2, ARHGEF3, NET1 and RTKN. Interacts with PLCE1 and AKAP13. Interacts with DIAPH1. Interacts (in the constitutively activated, GTP-bound form) with DGKQ. Interacts with RACK1; enhances RHOA activation. Interacts with PKP4; the interaction is detected at the midbody. Interacts (GTP-bound form preferentially) with PKN2; the interaction stimulates autophosphorylation and phosphorylation of PKN2. Interacts with ARHGDIA; this interaction inactivates and stabilizes RHOA. Interacts with ARHGDIB. Interacts (GTP-bound form) with KCNA2 (via cytoplasmic N-terminal domain) (By similarity). Interacts (GTP-bound form) with ECT2; the interaction results in allosteric activation of ECT2. Interacts with RAP1GDS1; the interaction is direct and in a 1:1 stoichiometry (By similarity).</text>
</comment>
<comment type="subcellular location">
    <subcellularLocation>
        <location evidence="1">Cell membrane</location>
        <topology evidence="1">Lipid-anchor</topology>
        <orientation evidence="1">Cytoplasmic side</orientation>
    </subcellularLocation>
    <subcellularLocation>
        <location evidence="1">Cytoplasm</location>
        <location evidence="1">Cytoskeleton</location>
    </subcellularLocation>
    <subcellularLocation>
        <location evidence="1">Cleavage furrow</location>
    </subcellularLocation>
    <subcellularLocation>
        <location evidence="1">Cytoplasm</location>
        <location evidence="1">Cell cortex</location>
    </subcellularLocation>
    <subcellularLocation>
        <location evidence="1">Midbody</location>
    </subcellularLocation>
    <subcellularLocation>
        <location evidence="4">Cell projection</location>
        <location evidence="4">Lamellipodium</location>
    </subcellularLocation>
    <subcellularLocation>
        <location evidence="4">Cell projection</location>
        <location evidence="4">Dendrite</location>
    </subcellularLocation>
    <subcellularLocation>
        <location evidence="1">Nucleus</location>
    </subcellularLocation>
    <subcellularLocation>
        <location evidence="1">Cytoplasm</location>
    </subcellularLocation>
    <text evidence="4">Localized to cell-cell contacts in calcium-treated keratinocytes (By similarity). Translocates to the equatorial region before furrow formation in a ECT2-dependent manner. Localizes to the equatorial cell cortex (at the site of the presumptive furrow) in early anaphase in an activated form and in a myosin- and actin-independent manner. Colocalizes with KANK1 at the contractile ring. Colocalizes with DAAM1 and KANK1 around centrosomes.</text>
</comment>
<comment type="PTM">
    <text evidence="1 2">Phosphorylation by PRKG1 at Ser-188 inactivates RHOA signaling (By similarity). Phosphorylation by SLK at Ser-188 in response to AGTR2 activation (By similarity).</text>
</comment>
<comment type="PTM">
    <text evidence="1 4">Ubiquitinated by the BCR(KCTD13) and BCR(TNFAIP1) E3 ubiquitin ligase complexes, leading to its degradation by the proteasome, thereby regulating the actin cytoskeleton and synaptic transmission in neurons. Ubiquitinated at Lys-135 in a FBXL19-mediated manner; leading to proteasomal degradation.</text>
</comment>
<comment type="PTM">
    <text evidence="4">Serotonylation of Gln-63 by TGM2 during activation and aggregation of platelets leads to constitutive activation of GTPase activity.</text>
</comment>
<comment type="similarity">
    <text evidence="9">Belongs to the small GTPase superfamily. Rho family.</text>
</comment>
<keyword id="KW-0013">ADP-ribosylation</keyword>
<keyword id="KW-0131">Cell cycle</keyword>
<keyword id="KW-0132">Cell division</keyword>
<keyword id="KW-1003">Cell membrane</keyword>
<keyword id="KW-0966">Cell projection</keyword>
<keyword id="KW-0963">Cytoplasm</keyword>
<keyword id="KW-0206">Cytoskeleton</keyword>
<keyword id="KW-0903">Direct protein sequencing</keyword>
<keyword id="KW-0342">GTP-binding</keyword>
<keyword id="KW-0378">Hydrolase</keyword>
<keyword id="KW-1017">Isopeptide bond</keyword>
<keyword id="KW-0449">Lipoprotein</keyword>
<keyword id="KW-0460">Magnesium</keyword>
<keyword id="KW-0472">Membrane</keyword>
<keyword id="KW-0488">Methylation</keyword>
<keyword id="KW-0547">Nucleotide-binding</keyword>
<keyword id="KW-0539">Nucleus</keyword>
<keyword id="KW-0597">Phosphoprotein</keyword>
<keyword id="KW-0636">Prenylation</keyword>
<keyword id="KW-0656">Proto-oncogene</keyword>
<keyword id="KW-1185">Reference proteome</keyword>
<keyword id="KW-0832">Ubl conjugation</keyword>
<name>RHOA_BOVIN</name>
<protein>
    <recommendedName>
        <fullName>Transforming protein RhoA</fullName>
        <ecNumber evidence="1">3.6.5.2</ecNumber>
    </recommendedName>
    <alternativeName>
        <fullName>Gb</fullName>
    </alternativeName>
    <alternativeName>
        <fullName>p21</fullName>
    </alternativeName>
</protein>
<dbReference type="EC" id="3.6.5.2" evidence="1"/>
<dbReference type="EMBL" id="M27278">
    <property type="protein sequence ID" value="AAA30409.1"/>
    <property type="molecule type" value="mRNA"/>
</dbReference>
<dbReference type="EMBL" id="BC102880">
    <property type="protein sequence ID" value="AAI02881.1"/>
    <property type="molecule type" value="mRNA"/>
</dbReference>
<dbReference type="PIR" id="A33518">
    <property type="entry name" value="TVBO12"/>
</dbReference>
<dbReference type="RefSeq" id="NP_788818.1">
    <property type="nucleotide sequence ID" value="NM_176645.3"/>
</dbReference>
<dbReference type="BMRB" id="P61585"/>
<dbReference type="SMR" id="P61585"/>
<dbReference type="CORUM" id="P61585"/>
<dbReference type="FunCoup" id="P61585">
    <property type="interactions" value="4092"/>
</dbReference>
<dbReference type="IntAct" id="P61585">
    <property type="interactions" value="8"/>
</dbReference>
<dbReference type="MINT" id="P61585"/>
<dbReference type="STRING" id="9913.ENSBTAP00000005600"/>
<dbReference type="iPTMnet" id="P61585"/>
<dbReference type="PaxDb" id="9913-ENSBTAP00000005600"/>
<dbReference type="PeptideAtlas" id="P61585"/>
<dbReference type="Ensembl" id="ENSBTAT00000005600.6">
    <property type="protein sequence ID" value="ENSBTAP00000005600.5"/>
    <property type="gene ID" value="ENSBTAG00000004279.6"/>
</dbReference>
<dbReference type="GeneID" id="338049"/>
<dbReference type="KEGG" id="bta:338049"/>
<dbReference type="CTD" id="387"/>
<dbReference type="VEuPathDB" id="HostDB:ENSBTAG00000004279"/>
<dbReference type="VGNC" id="VGNC:33943">
    <property type="gene designation" value="RHOA"/>
</dbReference>
<dbReference type="eggNOG" id="KOG0393">
    <property type="taxonomic scope" value="Eukaryota"/>
</dbReference>
<dbReference type="GeneTree" id="ENSGT00950000182945"/>
<dbReference type="HOGENOM" id="CLU_041217_21_2_1"/>
<dbReference type="InParanoid" id="P61585"/>
<dbReference type="OMA" id="EVNHYIP"/>
<dbReference type="OrthoDB" id="8830751at2759"/>
<dbReference type="TreeFam" id="TF300837"/>
<dbReference type="Reactome" id="R-BTA-114604">
    <property type="pathway name" value="GPVI-mediated activation cascade"/>
</dbReference>
<dbReference type="Reactome" id="R-BTA-193634">
    <property type="pathway name" value="Axonal growth inhibition (RHOA activation)"/>
</dbReference>
<dbReference type="Reactome" id="R-BTA-198203">
    <property type="pathway name" value="PI3K/AKT activation"/>
</dbReference>
<dbReference type="Reactome" id="R-BTA-209563">
    <property type="pathway name" value="Axonal growth stimulation"/>
</dbReference>
<dbReference type="Reactome" id="R-BTA-2173791">
    <property type="pathway name" value="TGF-beta receptor signaling in EMT (epithelial to mesenchymal transition)"/>
</dbReference>
<dbReference type="Reactome" id="R-BTA-392451">
    <property type="pathway name" value="G beta:gamma signalling through PI3Kgamma"/>
</dbReference>
<dbReference type="Reactome" id="R-BTA-3928662">
    <property type="pathway name" value="EPHB-mediated forward signaling"/>
</dbReference>
<dbReference type="Reactome" id="R-BTA-3928663">
    <property type="pathway name" value="EPHA-mediated growth cone collapse"/>
</dbReference>
<dbReference type="Reactome" id="R-BTA-4086400">
    <property type="pathway name" value="PCP/CE pathway"/>
</dbReference>
<dbReference type="Reactome" id="R-BTA-416482">
    <property type="pathway name" value="G alpha (12/13) signalling events"/>
</dbReference>
<dbReference type="Reactome" id="R-BTA-416550">
    <property type="pathway name" value="Sema4D mediated inhibition of cell attachment and migration"/>
</dbReference>
<dbReference type="Reactome" id="R-BTA-416572">
    <property type="pathway name" value="Sema4D induced cell migration and growth-cone collapse"/>
</dbReference>
<dbReference type="Reactome" id="R-BTA-4420097">
    <property type="pathway name" value="VEGFA-VEGFR2 Pathway"/>
</dbReference>
<dbReference type="Reactome" id="R-BTA-5625740">
    <property type="pathway name" value="RHO GTPases activate PKNs"/>
</dbReference>
<dbReference type="Reactome" id="R-BTA-5625900">
    <property type="pathway name" value="RHO GTPases activate CIT"/>
</dbReference>
<dbReference type="Reactome" id="R-BTA-5625970">
    <property type="pathway name" value="RHO GTPases activate KTN1"/>
</dbReference>
<dbReference type="Reactome" id="R-BTA-5627117">
    <property type="pathway name" value="RHO GTPases Activate ROCKs"/>
</dbReference>
<dbReference type="Reactome" id="R-BTA-5663220">
    <property type="pathway name" value="RHO GTPases Activate Formins"/>
</dbReference>
<dbReference type="Reactome" id="R-BTA-5666185">
    <property type="pathway name" value="RHO GTPases Activate Rhotekin and Rhophilins"/>
</dbReference>
<dbReference type="Reactome" id="R-BTA-5689896">
    <property type="pathway name" value="Ovarian tumor domain proteases"/>
</dbReference>
<dbReference type="Reactome" id="R-BTA-6785631">
    <property type="pathway name" value="ERBB2 Regulates Cell Motility"/>
</dbReference>
<dbReference type="Reactome" id="R-BTA-6798695">
    <property type="pathway name" value="Neutrophil degranulation"/>
</dbReference>
<dbReference type="Reactome" id="R-BTA-8849471">
    <property type="pathway name" value="PTK6 Regulates RHO GTPases, RAS GTPase and MAP kinases"/>
</dbReference>
<dbReference type="Reactome" id="R-BTA-8980692">
    <property type="pathway name" value="RHOA GTPase cycle"/>
</dbReference>
<dbReference type="Reactome" id="R-BTA-8985586">
    <property type="pathway name" value="SLIT2:ROBO1 increases RHOA activity"/>
</dbReference>
<dbReference type="Reactome" id="R-BTA-9013106">
    <property type="pathway name" value="RHOC GTPase cycle"/>
</dbReference>
<dbReference type="PRO" id="PR:P61585"/>
<dbReference type="Proteomes" id="UP000009136">
    <property type="component" value="Chromosome 22"/>
</dbReference>
<dbReference type="Bgee" id="ENSBTAG00000004279">
    <property type="expression patterns" value="Expressed in milk and 102 other cell types or tissues"/>
</dbReference>
<dbReference type="GO" id="GO:0043296">
    <property type="term" value="C:apical junction complex"/>
    <property type="evidence" value="ECO:0000250"/>
    <property type="project" value="UniProtKB"/>
</dbReference>
<dbReference type="GO" id="GO:0005938">
    <property type="term" value="C:cell cortex"/>
    <property type="evidence" value="ECO:0000250"/>
    <property type="project" value="UniProtKB"/>
</dbReference>
<dbReference type="GO" id="GO:0032154">
    <property type="term" value="C:cleavage furrow"/>
    <property type="evidence" value="ECO:0000318"/>
    <property type="project" value="GO_Central"/>
</dbReference>
<dbReference type="GO" id="GO:0009898">
    <property type="term" value="C:cytoplasmic side of plasma membrane"/>
    <property type="evidence" value="ECO:0000250"/>
    <property type="project" value="UniProtKB"/>
</dbReference>
<dbReference type="GO" id="GO:0005856">
    <property type="term" value="C:cytoskeleton"/>
    <property type="evidence" value="ECO:0007669"/>
    <property type="project" value="UniProtKB-SubCell"/>
</dbReference>
<dbReference type="GO" id="GO:0005829">
    <property type="term" value="C:cytosol"/>
    <property type="evidence" value="ECO:0000250"/>
    <property type="project" value="UniProtKB"/>
</dbReference>
<dbReference type="GO" id="GO:0043197">
    <property type="term" value="C:dendritic spine"/>
    <property type="evidence" value="ECO:0000318"/>
    <property type="project" value="GO_Central"/>
</dbReference>
<dbReference type="GO" id="GO:0005768">
    <property type="term" value="C:endosome"/>
    <property type="evidence" value="ECO:0007669"/>
    <property type="project" value="Ensembl"/>
</dbReference>
<dbReference type="GO" id="GO:0098978">
    <property type="term" value="C:glutamatergic synapse"/>
    <property type="evidence" value="ECO:0007669"/>
    <property type="project" value="Ensembl"/>
</dbReference>
<dbReference type="GO" id="GO:0030027">
    <property type="term" value="C:lamellipodium"/>
    <property type="evidence" value="ECO:0000250"/>
    <property type="project" value="UniProtKB"/>
</dbReference>
<dbReference type="GO" id="GO:0030496">
    <property type="term" value="C:midbody"/>
    <property type="evidence" value="ECO:0007669"/>
    <property type="project" value="UniProtKB-SubCell"/>
</dbReference>
<dbReference type="GO" id="GO:0005634">
    <property type="term" value="C:nucleus"/>
    <property type="evidence" value="ECO:0007669"/>
    <property type="project" value="UniProtKB-SubCell"/>
</dbReference>
<dbReference type="GO" id="GO:0005886">
    <property type="term" value="C:plasma membrane"/>
    <property type="evidence" value="ECO:0000318"/>
    <property type="project" value="GO_Central"/>
</dbReference>
<dbReference type="GO" id="GO:0032587">
    <property type="term" value="C:ruffle membrane"/>
    <property type="evidence" value="ECO:0007669"/>
    <property type="project" value="Ensembl"/>
</dbReference>
<dbReference type="GO" id="GO:0003925">
    <property type="term" value="F:G protein activity"/>
    <property type="evidence" value="ECO:0007669"/>
    <property type="project" value="UniProtKB-EC"/>
</dbReference>
<dbReference type="GO" id="GO:0005525">
    <property type="term" value="F:GTP binding"/>
    <property type="evidence" value="ECO:0000250"/>
    <property type="project" value="UniProtKB"/>
</dbReference>
<dbReference type="GO" id="GO:0003924">
    <property type="term" value="F:GTPase activity"/>
    <property type="evidence" value="ECO:0000250"/>
    <property type="project" value="UniProtKB"/>
</dbReference>
<dbReference type="GO" id="GO:0017022">
    <property type="term" value="F:myosin binding"/>
    <property type="evidence" value="ECO:0007669"/>
    <property type="project" value="Ensembl"/>
</dbReference>
<dbReference type="GO" id="GO:0019901">
    <property type="term" value="F:protein kinase binding"/>
    <property type="evidence" value="ECO:0000318"/>
    <property type="project" value="GO_Central"/>
</dbReference>
<dbReference type="GO" id="GO:0030036">
    <property type="term" value="P:actin cytoskeleton organization"/>
    <property type="evidence" value="ECO:0000250"/>
    <property type="project" value="UniProtKB"/>
</dbReference>
<dbReference type="GO" id="GO:0002363">
    <property type="term" value="P:alpha-beta T cell lineage commitment"/>
    <property type="evidence" value="ECO:0007669"/>
    <property type="project" value="Ensembl"/>
</dbReference>
<dbReference type="GO" id="GO:0030521">
    <property type="term" value="P:androgen receptor signaling pathway"/>
    <property type="evidence" value="ECO:0007669"/>
    <property type="project" value="Ensembl"/>
</dbReference>
<dbReference type="GO" id="GO:0001998">
    <property type="term" value="P:angiotensin-mediated vasoconstriction involved in regulation of systemic arterial blood pressure"/>
    <property type="evidence" value="ECO:0007669"/>
    <property type="project" value="Ensembl"/>
</dbReference>
<dbReference type="GO" id="GO:0003189">
    <property type="term" value="P:aortic valve formation"/>
    <property type="evidence" value="ECO:0007669"/>
    <property type="project" value="Ensembl"/>
</dbReference>
<dbReference type="GO" id="GO:0043297">
    <property type="term" value="P:apical junction assembly"/>
    <property type="evidence" value="ECO:0000250"/>
    <property type="project" value="UniProtKB"/>
</dbReference>
<dbReference type="GO" id="GO:0038027">
    <property type="term" value="P:apolipoprotein A-I-mediated signaling pathway"/>
    <property type="evidence" value="ECO:0007669"/>
    <property type="project" value="Ensembl"/>
</dbReference>
<dbReference type="GO" id="GO:0043366">
    <property type="term" value="P:beta selection"/>
    <property type="evidence" value="ECO:0007669"/>
    <property type="project" value="Ensembl"/>
</dbReference>
<dbReference type="GO" id="GO:0061430">
    <property type="term" value="P:bone trabecula morphogenesis"/>
    <property type="evidence" value="ECO:0007669"/>
    <property type="project" value="Ensembl"/>
</dbReference>
<dbReference type="GO" id="GO:0034329">
    <property type="term" value="P:cell junction assembly"/>
    <property type="evidence" value="ECO:0000250"/>
    <property type="project" value="UniProtKB"/>
</dbReference>
<dbReference type="GO" id="GO:0016477">
    <property type="term" value="P:cell migration"/>
    <property type="evidence" value="ECO:0000250"/>
    <property type="project" value="UniProtKB"/>
</dbReference>
<dbReference type="GO" id="GO:0000902">
    <property type="term" value="P:cell morphogenesis"/>
    <property type="evidence" value="ECO:0007669"/>
    <property type="project" value="Ensembl"/>
</dbReference>
<dbReference type="GO" id="GO:0007160">
    <property type="term" value="P:cell-matrix adhesion"/>
    <property type="evidence" value="ECO:0007669"/>
    <property type="project" value="Ensembl"/>
</dbReference>
<dbReference type="GO" id="GO:1990869">
    <property type="term" value="P:cellular response to chemokine"/>
    <property type="evidence" value="ECO:0000250"/>
    <property type="project" value="UniProtKB"/>
</dbReference>
<dbReference type="GO" id="GO:0071222">
    <property type="term" value="P:cellular response to lipopolysaccharide"/>
    <property type="evidence" value="ECO:0007669"/>
    <property type="project" value="Ensembl"/>
</dbReference>
<dbReference type="GO" id="GO:0021795">
    <property type="term" value="P:cerebral cortex cell migration"/>
    <property type="evidence" value="ECO:0007669"/>
    <property type="project" value="Ensembl"/>
</dbReference>
<dbReference type="GO" id="GO:0036089">
    <property type="term" value="P:cleavage furrow formation"/>
    <property type="evidence" value="ECO:0000250"/>
    <property type="project" value="UniProtKB"/>
</dbReference>
<dbReference type="GO" id="GO:0031122">
    <property type="term" value="P:cytoplasmic microtubule organization"/>
    <property type="evidence" value="ECO:0000250"/>
    <property type="project" value="UniProtKB"/>
</dbReference>
<dbReference type="GO" id="GO:0043542">
    <property type="term" value="P:endothelial cell migration"/>
    <property type="evidence" value="ECO:0007669"/>
    <property type="project" value="Ensembl"/>
</dbReference>
<dbReference type="GO" id="GO:0097498">
    <property type="term" value="P:endothelial tube lumen extension"/>
    <property type="evidence" value="ECO:0007669"/>
    <property type="project" value="Ensembl"/>
</dbReference>
<dbReference type="GO" id="GO:0045198">
    <property type="term" value="P:establishment of epithelial cell apical/basal polarity"/>
    <property type="evidence" value="ECO:0000250"/>
    <property type="project" value="UniProtKB"/>
</dbReference>
<dbReference type="GO" id="GO:0021861">
    <property type="term" value="P:forebrain radial glial cell differentiation"/>
    <property type="evidence" value="ECO:0007669"/>
    <property type="project" value="Ensembl"/>
</dbReference>
<dbReference type="GO" id="GO:0001822">
    <property type="term" value="P:kidney development"/>
    <property type="evidence" value="ECO:0007669"/>
    <property type="project" value="Ensembl"/>
</dbReference>
<dbReference type="GO" id="GO:1903673">
    <property type="term" value="P:mitotic cleavage furrow formation"/>
    <property type="evidence" value="ECO:0000250"/>
    <property type="project" value="UniProtKB"/>
</dbReference>
<dbReference type="GO" id="GO:0090307">
    <property type="term" value="P:mitotic spindle assembly"/>
    <property type="evidence" value="ECO:0007669"/>
    <property type="project" value="Ensembl"/>
</dbReference>
<dbReference type="GO" id="GO:0097049">
    <property type="term" value="P:motor neuron apoptotic process"/>
    <property type="evidence" value="ECO:0007669"/>
    <property type="project" value="Ensembl"/>
</dbReference>
<dbReference type="GO" id="GO:0050919">
    <property type="term" value="P:negative chemotaxis"/>
    <property type="evidence" value="ECO:0007669"/>
    <property type="project" value="Ensembl"/>
</dbReference>
<dbReference type="GO" id="GO:0090051">
    <property type="term" value="P:negative regulation of cell migration involved in sprouting angiogenesis"/>
    <property type="evidence" value="ECO:0007669"/>
    <property type="project" value="Ensembl"/>
</dbReference>
<dbReference type="GO" id="GO:0045792">
    <property type="term" value="P:negative regulation of cell size"/>
    <property type="evidence" value="ECO:0007669"/>
    <property type="project" value="Ensembl"/>
</dbReference>
<dbReference type="GO" id="GO:0010812">
    <property type="term" value="P:negative regulation of cell-substrate adhesion"/>
    <property type="evidence" value="ECO:0007669"/>
    <property type="project" value="Ensembl"/>
</dbReference>
<dbReference type="GO" id="GO:0033144">
    <property type="term" value="P:negative regulation of intracellular steroid hormone receptor signaling pathway"/>
    <property type="evidence" value="ECO:0007669"/>
    <property type="project" value="Ensembl"/>
</dbReference>
<dbReference type="GO" id="GO:2000672">
    <property type="term" value="P:negative regulation of motor neuron apoptotic process"/>
    <property type="evidence" value="ECO:0007669"/>
    <property type="project" value="Ensembl"/>
</dbReference>
<dbReference type="GO" id="GO:0090324">
    <property type="term" value="P:negative regulation of oxidative phosphorylation"/>
    <property type="evidence" value="ECO:0007669"/>
    <property type="project" value="Ensembl"/>
</dbReference>
<dbReference type="GO" id="GO:1903427">
    <property type="term" value="P:negative regulation of reactive oxygen species biosynthetic process"/>
    <property type="evidence" value="ECO:0007669"/>
    <property type="project" value="Ensembl"/>
</dbReference>
<dbReference type="GO" id="GO:0001764">
    <property type="term" value="P:neuron migration"/>
    <property type="evidence" value="ECO:0007669"/>
    <property type="project" value="Ensembl"/>
</dbReference>
<dbReference type="GO" id="GO:0042476">
    <property type="term" value="P:odontogenesis"/>
    <property type="evidence" value="ECO:0007669"/>
    <property type="project" value="Ensembl"/>
</dbReference>
<dbReference type="GO" id="GO:0043931">
    <property type="term" value="P:ossification involved in bone maturation"/>
    <property type="evidence" value="ECO:0007669"/>
    <property type="project" value="Ensembl"/>
</dbReference>
<dbReference type="GO" id="GO:0046638">
    <property type="term" value="P:positive regulation of alpha-beta T cell differentiation"/>
    <property type="evidence" value="ECO:0007669"/>
    <property type="project" value="Ensembl"/>
</dbReference>
<dbReference type="GO" id="GO:0043123">
    <property type="term" value="P:positive regulation of canonical NF-kappaB signal transduction"/>
    <property type="evidence" value="ECO:0000250"/>
    <property type="project" value="UniProtKB"/>
</dbReference>
<dbReference type="GO" id="GO:0032467">
    <property type="term" value="P:positive regulation of cytokinesis"/>
    <property type="evidence" value="ECO:0000250"/>
    <property type="project" value="UniProtKB"/>
</dbReference>
<dbReference type="GO" id="GO:1904996">
    <property type="term" value="P:positive regulation of leukocyte adhesion to vascular endothelial cell"/>
    <property type="evidence" value="ECO:0007669"/>
    <property type="project" value="Ensembl"/>
</dbReference>
<dbReference type="GO" id="GO:0045666">
    <property type="term" value="P:positive regulation of neuron differentiation"/>
    <property type="evidence" value="ECO:0007669"/>
    <property type="project" value="Ensembl"/>
</dbReference>
<dbReference type="GO" id="GO:0071803">
    <property type="term" value="P:positive regulation of podosome assembly"/>
    <property type="evidence" value="ECO:0007669"/>
    <property type="project" value="Ensembl"/>
</dbReference>
<dbReference type="GO" id="GO:0071902">
    <property type="term" value="P:positive regulation of protein serine/threonine kinase activity"/>
    <property type="evidence" value="ECO:0000250"/>
    <property type="project" value="UniProtKB"/>
</dbReference>
<dbReference type="GO" id="GO:0051496">
    <property type="term" value="P:positive regulation of stress fiber assembly"/>
    <property type="evidence" value="ECO:0007669"/>
    <property type="project" value="Ensembl"/>
</dbReference>
<dbReference type="GO" id="GO:2000406">
    <property type="term" value="P:positive regulation of T cell migration"/>
    <property type="evidence" value="ECO:0000250"/>
    <property type="project" value="UniProtKB"/>
</dbReference>
<dbReference type="GO" id="GO:1904695">
    <property type="term" value="P:positive regulation of vascular associated smooth muscle contraction"/>
    <property type="evidence" value="ECO:0007669"/>
    <property type="project" value="Ensembl"/>
</dbReference>
<dbReference type="GO" id="GO:0032956">
    <property type="term" value="P:regulation of actin cytoskeleton organization"/>
    <property type="evidence" value="ECO:0000318"/>
    <property type="project" value="GO_Central"/>
</dbReference>
<dbReference type="GO" id="GO:0030334">
    <property type="term" value="P:regulation of cell migration"/>
    <property type="evidence" value="ECO:0000250"/>
    <property type="project" value="UniProtKB"/>
</dbReference>
<dbReference type="GO" id="GO:0070507">
    <property type="term" value="P:regulation of microtubule cytoskeleton organization"/>
    <property type="evidence" value="ECO:0007669"/>
    <property type="project" value="Ensembl"/>
</dbReference>
<dbReference type="GO" id="GO:1905274">
    <property type="term" value="P:regulation of modification of postsynaptic actin cytoskeleton"/>
    <property type="evidence" value="ECO:0007669"/>
    <property type="project" value="Ensembl"/>
</dbReference>
<dbReference type="GO" id="GO:2000177">
    <property type="term" value="P:regulation of neural precursor cell proliferation"/>
    <property type="evidence" value="ECO:0007669"/>
    <property type="project" value="Ensembl"/>
</dbReference>
<dbReference type="GO" id="GO:0010975">
    <property type="term" value="P:regulation of neuron projection development"/>
    <property type="evidence" value="ECO:0007669"/>
    <property type="project" value="Ensembl"/>
</dbReference>
<dbReference type="GO" id="GO:0033688">
    <property type="term" value="P:regulation of osteoblast proliferation"/>
    <property type="evidence" value="ECO:0007669"/>
    <property type="project" value="Ensembl"/>
</dbReference>
<dbReference type="GO" id="GO:0003100">
    <property type="term" value="P:regulation of systemic arterial blood pressure by endothelin"/>
    <property type="evidence" value="ECO:0007669"/>
    <property type="project" value="Ensembl"/>
</dbReference>
<dbReference type="GO" id="GO:0006357">
    <property type="term" value="P:regulation of transcription by RNA polymerase II"/>
    <property type="evidence" value="ECO:0007669"/>
    <property type="project" value="Ensembl"/>
</dbReference>
<dbReference type="GO" id="GO:0007266">
    <property type="term" value="P:Rho protein signal transduction"/>
    <property type="evidence" value="ECO:0000250"/>
    <property type="project" value="UniProtKB"/>
</dbReference>
<dbReference type="GO" id="GO:0035385">
    <property type="term" value="P:Roundabout signaling pathway"/>
    <property type="evidence" value="ECO:0000250"/>
    <property type="project" value="UniProtKB"/>
</dbReference>
<dbReference type="GO" id="GO:0071526">
    <property type="term" value="P:semaphorin-plexin signaling pathway"/>
    <property type="evidence" value="ECO:0007669"/>
    <property type="project" value="Ensembl"/>
</dbReference>
<dbReference type="GO" id="GO:1902766">
    <property type="term" value="P:skeletal muscle satellite cell migration"/>
    <property type="evidence" value="ECO:0000250"/>
    <property type="project" value="AgBase"/>
</dbReference>
<dbReference type="GO" id="GO:0007519">
    <property type="term" value="P:skeletal muscle tissue development"/>
    <property type="evidence" value="ECO:0007669"/>
    <property type="project" value="Ensembl"/>
</dbReference>
<dbReference type="GO" id="GO:0043149">
    <property type="term" value="P:stress fiber assembly"/>
    <property type="evidence" value="ECO:0000250"/>
    <property type="project" value="UniProtKB"/>
</dbReference>
<dbReference type="GO" id="GO:0034446">
    <property type="term" value="P:substrate adhesion-dependent cell spreading"/>
    <property type="evidence" value="ECO:0000250"/>
    <property type="project" value="UniProtKB"/>
</dbReference>
<dbReference type="GO" id="GO:0044319">
    <property type="term" value="P:wound healing, spreading of cells"/>
    <property type="evidence" value="ECO:0000250"/>
    <property type="project" value="AgBase"/>
</dbReference>
<dbReference type="CDD" id="cd01870">
    <property type="entry name" value="RhoA_like"/>
    <property type="match status" value="1"/>
</dbReference>
<dbReference type="FunFam" id="3.40.50.300:FF:000095">
    <property type="entry name" value="Rho-related GTP-binding protein RhoC"/>
    <property type="match status" value="1"/>
</dbReference>
<dbReference type="Gene3D" id="3.40.50.300">
    <property type="entry name" value="P-loop containing nucleotide triphosphate hydrolases"/>
    <property type="match status" value="1"/>
</dbReference>
<dbReference type="InterPro" id="IPR027417">
    <property type="entry name" value="P-loop_NTPase"/>
</dbReference>
<dbReference type="InterPro" id="IPR005225">
    <property type="entry name" value="Small_GTP-bd"/>
</dbReference>
<dbReference type="InterPro" id="IPR001806">
    <property type="entry name" value="Small_GTPase"/>
</dbReference>
<dbReference type="InterPro" id="IPR003578">
    <property type="entry name" value="Small_GTPase_Rho"/>
</dbReference>
<dbReference type="NCBIfam" id="TIGR00231">
    <property type="entry name" value="small_GTP"/>
    <property type="match status" value="1"/>
</dbReference>
<dbReference type="PANTHER" id="PTHR24072">
    <property type="entry name" value="RHO FAMILY GTPASE"/>
    <property type="match status" value="1"/>
</dbReference>
<dbReference type="Pfam" id="PF00071">
    <property type="entry name" value="Ras"/>
    <property type="match status" value="1"/>
</dbReference>
<dbReference type="PRINTS" id="PR00449">
    <property type="entry name" value="RASTRNSFRMNG"/>
</dbReference>
<dbReference type="SMART" id="SM00175">
    <property type="entry name" value="RAB"/>
    <property type="match status" value="1"/>
</dbReference>
<dbReference type="SMART" id="SM00173">
    <property type="entry name" value="RAS"/>
    <property type="match status" value="1"/>
</dbReference>
<dbReference type="SMART" id="SM00174">
    <property type="entry name" value="RHO"/>
    <property type="match status" value="1"/>
</dbReference>
<dbReference type="SUPFAM" id="SSF52540">
    <property type="entry name" value="P-loop containing nucleoside triphosphate hydrolases"/>
    <property type="match status" value="1"/>
</dbReference>
<dbReference type="PROSITE" id="PS51420">
    <property type="entry name" value="RHO"/>
    <property type="match status" value="1"/>
</dbReference>
<proteinExistence type="evidence at protein level"/>
<evidence type="ECO:0000250" key="1">
    <source>
        <dbReference type="UniProtKB" id="P61586"/>
    </source>
</evidence>
<evidence type="ECO:0000250" key="2">
    <source>
        <dbReference type="UniProtKB" id="P61589"/>
    </source>
</evidence>
<evidence type="ECO:0000250" key="3">
    <source>
        <dbReference type="UniProtKB" id="P62820"/>
    </source>
</evidence>
<evidence type="ECO:0000250" key="4">
    <source>
        <dbReference type="UniProtKB" id="Q9QUI0"/>
    </source>
</evidence>
<evidence type="ECO:0000255" key="5"/>
<evidence type="ECO:0000269" key="6">
    <source>
    </source>
</evidence>
<evidence type="ECO:0000269" key="7">
    <source>
    </source>
</evidence>
<evidence type="ECO:0000269" key="8">
    <source>
    </source>
</evidence>
<evidence type="ECO:0000305" key="9"/>
<organism>
    <name type="scientific">Bos taurus</name>
    <name type="common">Bovine</name>
    <dbReference type="NCBI Taxonomy" id="9913"/>
    <lineage>
        <taxon>Eukaryota</taxon>
        <taxon>Metazoa</taxon>
        <taxon>Chordata</taxon>
        <taxon>Craniata</taxon>
        <taxon>Vertebrata</taxon>
        <taxon>Euteleostomi</taxon>
        <taxon>Mammalia</taxon>
        <taxon>Eutheria</taxon>
        <taxon>Laurasiatheria</taxon>
        <taxon>Artiodactyla</taxon>
        <taxon>Ruminantia</taxon>
        <taxon>Pecora</taxon>
        <taxon>Bovidae</taxon>
        <taxon>Bovinae</taxon>
        <taxon>Bos</taxon>
    </lineage>
</organism>
<accession>P61585</accession>
<accession>P06749</accession>
<accession>Q3ZC72</accession>
<accession>Q9UEJ4</accession>
<feature type="chain" id="PRO_0000030407" description="Transforming protein RhoA">
    <location>
        <begin position="1"/>
        <end position="190"/>
    </location>
</feature>
<feature type="propeptide" id="PRO_0000457667" description="Removed in mature form" evidence="6">
    <location>
        <begin position="191"/>
        <end position="193"/>
    </location>
</feature>
<feature type="region of interest" description="Switch II region; involved in RAP1GDS1 isoform 2 binding" evidence="1">
    <location>
        <begin position="61"/>
        <end position="78"/>
    </location>
</feature>
<feature type="short sequence motif" description="Effector region" evidence="5">
    <location>
        <begin position="34"/>
        <end position="42"/>
    </location>
</feature>
<feature type="binding site" evidence="1">
    <location>
        <begin position="12"/>
        <end position="19"/>
    </location>
    <ligand>
        <name>GTP</name>
        <dbReference type="ChEBI" id="CHEBI:37565"/>
    </ligand>
</feature>
<feature type="binding site" evidence="3">
    <location>
        <begin position="30"/>
        <end position="37"/>
    </location>
    <ligand>
        <name>GTP</name>
        <dbReference type="ChEBI" id="CHEBI:37565"/>
    </ligand>
</feature>
<feature type="binding site" evidence="3">
    <location>
        <begin position="59"/>
        <end position="63"/>
    </location>
    <ligand>
        <name>GTP</name>
        <dbReference type="ChEBI" id="CHEBI:37565"/>
    </ligand>
</feature>
<feature type="binding site" evidence="1">
    <location>
        <begin position="117"/>
        <end position="120"/>
    </location>
    <ligand>
        <name>GTP</name>
        <dbReference type="ChEBI" id="CHEBI:37565"/>
    </ligand>
</feature>
<feature type="binding site" evidence="3">
    <location>
        <begin position="160"/>
        <end position="162"/>
    </location>
    <ligand>
        <name>GTP</name>
        <dbReference type="ChEBI" id="CHEBI:37565"/>
    </ligand>
</feature>
<feature type="modified residue" description="(Microbial infection) ADP-ribosylasparagine; by botulinum toxin" evidence="7 8">
    <location>
        <position position="41"/>
    </location>
</feature>
<feature type="modified residue" description="5-glutamyl serotonin" evidence="4">
    <location>
        <position position="63"/>
    </location>
</feature>
<feature type="modified residue" description="Phosphoserine; by PKG/PRKG1" evidence="2">
    <location>
        <position position="188"/>
    </location>
</feature>
<feature type="modified residue" description="Cysteine methyl ester" evidence="6">
    <location>
        <position position="190"/>
    </location>
</feature>
<feature type="lipid moiety-binding region" description="S-geranylgeranyl cysteine" evidence="6">
    <location>
        <position position="190"/>
    </location>
</feature>
<feature type="cross-link" description="Glycyl lysine isopeptide (Lys-Gly) (interchain with G-Cter in ubiquitin)" evidence="1">
    <location>
        <position position="135"/>
    </location>
</feature>